<accession>A8E4N3</accession>
<comment type="function">
    <text evidence="2 3">Functions as part of axonemal radial spoke complexes that play an important part in the motility of sperm and cilia (By similarity). Functions as a protein kinase A-anchoring protein that scaffolds the cAMP-dependent protein kinase holoenzyme. May serve as a point of convergence for MAPK and PKA signaling in cilia (By similarity).</text>
</comment>
<comment type="subunit">
    <text evidence="2 3">Component of the axonemal radial spoke 1 (RS1) and 2 (RS2) complexes, at least composed of spoke head proteins RSPH1, RSPH3, RSPH9 and the cilia-specific component RSPH4A or sperm-specific component RSPH6A, spoke stalk proteins RSPH14, DNAJB13, DYDC1, ROPN1L and NME5, and the RS1 complex-specific anchor protein IQUB (By similarity). Interacts with IQUB (By similarity). Interacts with phosphorylated MAPK1. Interacts with MEK1. Interacts with PKA regulatory subunits PRKAR1A and PRKAR1B (By similarity). Interacts with RSPH1. Interacts with RSPH4A. Interacts with RSPH6A. Interacts with RSPH9 (By similarity). Interacts with LRRC23 (By similarity).</text>
</comment>
<comment type="subcellular location">
    <subcellularLocation>
        <location evidence="1">Cytoplasm</location>
        <location evidence="1">Cytoskeleton</location>
        <location evidence="1">Cilium axoneme</location>
    </subcellularLocation>
    <subcellularLocation>
        <location evidence="6">Cytoplasm</location>
        <location evidence="6">Cytoskeleton</location>
        <location evidence="6">Flagellum axoneme</location>
    </subcellularLocation>
</comment>
<comment type="similarity">
    <text evidence="6">Belongs to the flagellar radial spoke RSP3 family.</text>
</comment>
<organism>
    <name type="scientific">Bos taurus</name>
    <name type="common">Bovine</name>
    <dbReference type="NCBI Taxonomy" id="9913"/>
    <lineage>
        <taxon>Eukaryota</taxon>
        <taxon>Metazoa</taxon>
        <taxon>Chordata</taxon>
        <taxon>Craniata</taxon>
        <taxon>Vertebrata</taxon>
        <taxon>Euteleostomi</taxon>
        <taxon>Mammalia</taxon>
        <taxon>Eutheria</taxon>
        <taxon>Laurasiatheria</taxon>
        <taxon>Artiodactyla</taxon>
        <taxon>Ruminantia</taxon>
        <taxon>Pecora</taxon>
        <taxon>Bovidae</taxon>
        <taxon>Bovinae</taxon>
        <taxon>Bos</taxon>
    </lineage>
</organism>
<gene>
    <name type="primary">RSPH3</name>
    <name type="synonym">RSHL2</name>
</gene>
<evidence type="ECO:0000250" key="1">
    <source>
        <dbReference type="UniProtKB" id="P12759"/>
    </source>
</evidence>
<evidence type="ECO:0000250" key="2">
    <source>
        <dbReference type="UniProtKB" id="Q86UC2"/>
    </source>
</evidence>
<evidence type="ECO:0000250" key="3">
    <source>
        <dbReference type="UniProtKB" id="Q9DA80"/>
    </source>
</evidence>
<evidence type="ECO:0000255" key="4"/>
<evidence type="ECO:0000256" key="5">
    <source>
        <dbReference type="SAM" id="MobiDB-lite"/>
    </source>
</evidence>
<evidence type="ECO:0000305" key="6"/>
<feature type="chain" id="PRO_0000313740" description="Radial spoke head protein 3 homolog">
    <location>
        <begin position="1"/>
        <end position="606"/>
    </location>
</feature>
<feature type="region of interest" description="Disordered" evidence="5">
    <location>
        <begin position="1"/>
        <end position="103"/>
    </location>
</feature>
<feature type="region of interest" description="Disordered" evidence="5">
    <location>
        <begin position="520"/>
        <end position="606"/>
    </location>
</feature>
<feature type="coiled-coil region" evidence="4">
    <location>
        <begin position="393"/>
        <end position="429"/>
    </location>
</feature>
<feature type="coiled-coil region" evidence="4">
    <location>
        <begin position="572"/>
        <end position="604"/>
    </location>
</feature>
<feature type="compositionally biased region" description="Basic and acidic residues" evidence="5">
    <location>
        <begin position="15"/>
        <end position="46"/>
    </location>
</feature>
<feature type="compositionally biased region" description="Polar residues" evidence="5">
    <location>
        <begin position="547"/>
        <end position="556"/>
    </location>
</feature>
<feature type="compositionally biased region" description="Basic and acidic residues" evidence="5">
    <location>
        <begin position="573"/>
        <end position="606"/>
    </location>
</feature>
<feature type="modified residue" description="Phosphothreonine; by MAPK1" evidence="2">
    <location>
        <position position="331"/>
    </location>
</feature>
<proteinExistence type="evidence at transcript level"/>
<dbReference type="EMBL" id="BC149859">
    <property type="protein sequence ID" value="AAI49860.1"/>
    <property type="molecule type" value="mRNA"/>
</dbReference>
<dbReference type="RefSeq" id="NP_001103269.1">
    <property type="nucleotide sequence ID" value="NM_001109799.1"/>
</dbReference>
<dbReference type="RefSeq" id="XP_010807026.1">
    <property type="nucleotide sequence ID" value="XM_010808724.2"/>
</dbReference>
<dbReference type="RefSeq" id="XP_024852474.1">
    <property type="nucleotide sequence ID" value="XM_024996706.2"/>
</dbReference>
<dbReference type="EMDB" id="EMD-50664"/>
<dbReference type="SMR" id="A8E4N3"/>
<dbReference type="FunCoup" id="A8E4N3">
    <property type="interactions" value="32"/>
</dbReference>
<dbReference type="STRING" id="9913.ENSBTAP00000007814"/>
<dbReference type="PaxDb" id="9913-ENSBTAP00000007814"/>
<dbReference type="Ensembl" id="ENSBTAT00000007814.6">
    <property type="protein sequence ID" value="ENSBTAP00000007814.4"/>
    <property type="gene ID" value="ENSBTAG00000005955.6"/>
</dbReference>
<dbReference type="GeneID" id="533135"/>
<dbReference type="KEGG" id="bta:533135"/>
<dbReference type="CTD" id="83861"/>
<dbReference type="VEuPathDB" id="HostDB:ENSBTAG00000005955"/>
<dbReference type="VGNC" id="VGNC:34184">
    <property type="gene designation" value="RSPH3"/>
</dbReference>
<dbReference type="eggNOG" id="ENOG502QQSZ">
    <property type="taxonomic scope" value="Eukaryota"/>
</dbReference>
<dbReference type="GeneTree" id="ENSGT00390000004172"/>
<dbReference type="HOGENOM" id="CLU_036980_4_0_1"/>
<dbReference type="InParanoid" id="A8E4N3"/>
<dbReference type="OMA" id="CPWHYVH"/>
<dbReference type="OrthoDB" id="313308at2759"/>
<dbReference type="TreeFam" id="TF324184"/>
<dbReference type="Proteomes" id="UP000009136">
    <property type="component" value="Chromosome 9"/>
</dbReference>
<dbReference type="Bgee" id="ENSBTAG00000005955">
    <property type="expression patterns" value="Expressed in olfactory segment of nasal mucosa and 100 other cell types or tissues"/>
</dbReference>
<dbReference type="GO" id="GO:0097729">
    <property type="term" value="C:9+2 motile cilium"/>
    <property type="evidence" value="ECO:0000250"/>
    <property type="project" value="UniProtKB"/>
</dbReference>
<dbReference type="GO" id="GO:0005929">
    <property type="term" value="C:cilium"/>
    <property type="evidence" value="ECO:0000318"/>
    <property type="project" value="GO_Central"/>
</dbReference>
<dbReference type="GO" id="GO:0001535">
    <property type="term" value="C:radial spoke head"/>
    <property type="evidence" value="ECO:0000250"/>
    <property type="project" value="UniProtKB"/>
</dbReference>
<dbReference type="InterPro" id="IPR009290">
    <property type="entry name" value="Radial_spoke_3"/>
</dbReference>
<dbReference type="PANTHER" id="PTHR21648">
    <property type="entry name" value="FLAGELLAR RADIAL SPOKE PROTEIN 3"/>
    <property type="match status" value="1"/>
</dbReference>
<dbReference type="PANTHER" id="PTHR21648:SF0">
    <property type="entry name" value="RADIAL SPOKE HEAD PROTEIN 3 HOMOLOG"/>
    <property type="match status" value="1"/>
</dbReference>
<dbReference type="Pfam" id="PF06098">
    <property type="entry name" value="Radial_spoke_3"/>
    <property type="match status" value="1"/>
</dbReference>
<reference key="1">
    <citation type="submission" date="2007-07" db="EMBL/GenBank/DDBJ databases">
        <authorList>
            <consortium name="NIH - Mammalian Gene Collection (MGC) project"/>
        </authorList>
    </citation>
    <scope>NUCLEOTIDE SEQUENCE [LARGE SCALE MRNA]</scope>
    <source>
        <strain>Hereford</strain>
        <tissue>Ascending colon</tissue>
    </source>
</reference>
<keyword id="KW-0966">Cell projection</keyword>
<keyword id="KW-0969">Cilium</keyword>
<keyword id="KW-0175">Coiled coil</keyword>
<keyword id="KW-0963">Cytoplasm</keyword>
<keyword id="KW-0206">Cytoskeleton</keyword>
<keyword id="KW-0282">Flagellum</keyword>
<keyword id="KW-0597">Phosphoprotein</keyword>
<keyword id="KW-1185">Reference proteome</keyword>
<name>RSPH3_BOVIN</name>
<protein>
    <recommendedName>
        <fullName>Radial spoke head protein 3 homolog</fullName>
    </recommendedName>
    <alternativeName>
        <fullName>A-kinase anchor protein RSPH3</fullName>
    </alternativeName>
    <alternativeName>
        <fullName>Radial spoke head-like protein 2</fullName>
    </alternativeName>
</protein>
<sequence length="606" mass="68700">MARSEARRQAREKRPRAVPEERALRERRQPRPRREPLESGAGDHRRPPQASAGAAGHASFMRRLVDQEDAGGQSQEPEVLGRTGNLPRKPASRNSPEAPPLDGTLGCWATGAGAAGGFGGAQNRACVAPTSCPGNLPARPLPFLPPLLASRNPCPWHYVHLSGSHDTLVPTCFEAKLHQKGSGPTPSATSTLAERASPAMATYTYTSRPRALPCQRRRYRDDLMQQPEEPVHYGNIMYDRRVIRGNTYALQSVPLPGQPDPVEIQRQQQARRRAFARKQAQEQLRPRTPEPVEGRKHVDVQTELYLEEIADRIVEVDMECQTDAFLDKPPTPLFIPAKTGKDVATEILEGELFDFDLEVKPMLEVLVGKTIEQSLLEVMEEEELANLRASQYAYEELRNIELAEVQRLEEQERRHREEKERRKQQQWQVVHKHNETSQKIAARAFAQRYLADLLPSVFDSLRDGGYFYDPVERDIEIGFLPWLMNEVDKTMESSMVGRTVLDMLIREVVERRLNLYEQKEGRHASVRPENGLGGPGGTREPLVGFESQDQGASQAQRPLPDRDSLQRTPYDARYAERVSSQERRLAEENDELTEMRKSSKREELSQ</sequence>